<organism>
    <name type="scientific">Uperoleia mjobergii</name>
    <name type="common">Mjoberg's toadlet</name>
    <name type="synonym">Pseudophryne mjobergii</name>
    <dbReference type="NCBI Taxonomy" id="104954"/>
    <lineage>
        <taxon>Eukaryota</taxon>
        <taxon>Metazoa</taxon>
        <taxon>Chordata</taxon>
        <taxon>Craniata</taxon>
        <taxon>Vertebrata</taxon>
        <taxon>Euteleostomi</taxon>
        <taxon>Amphibia</taxon>
        <taxon>Batrachia</taxon>
        <taxon>Anura</taxon>
        <taxon>Neobatrachia</taxon>
        <taxon>Myobatrachoidea</taxon>
        <taxon>Myobatrachidae</taxon>
        <taxon>Myobatrachinae</taxon>
        <taxon>Uperoleia</taxon>
    </lineage>
</organism>
<feature type="peptide" id="PRO_0000043852" description="Uperin-2.7">
    <location>
        <begin position="1"/>
        <end position="19"/>
    </location>
</feature>
<reference key="1">
    <citation type="journal article" date="1996" name="Aust. J. Chem.">
        <title>New antibiotic uperin peptides from the dorsal glands of the australian toadlet Uperoleia mjobergii.</title>
        <authorList>
            <person name="Bradford A.M."/>
            <person name="Bowie J.H."/>
            <person name="Tyler M.J."/>
            <person name="Wallace J.C."/>
        </authorList>
    </citation>
    <scope>PROTEIN SEQUENCE</scope>
    <scope>MASS SPECTROMETRY</scope>
    <source>
        <tissue>Skin secretion</tissue>
    </source>
</reference>
<protein>
    <recommendedName>
        <fullName>Uperin-2.7</fullName>
    </recommendedName>
</protein>
<evidence type="ECO:0000269" key="1">
    <source ref="1"/>
</evidence>
<name>UPE27_UPEMJ</name>
<accession>P82039</accession>
<proteinExistence type="evidence at protein level"/>
<sequence>GIIDIAKKLVGGIRNVLGI</sequence>
<comment type="subcellular location">
    <subcellularLocation>
        <location>Secreted</location>
    </subcellularLocation>
</comment>
<comment type="tissue specificity">
    <text>Expressed by the skin dorsal glands.</text>
</comment>
<comment type="mass spectrometry"/>
<dbReference type="GO" id="GO:0005576">
    <property type="term" value="C:extracellular region"/>
    <property type="evidence" value="ECO:0007669"/>
    <property type="project" value="UniProtKB-SubCell"/>
</dbReference>
<dbReference type="GO" id="GO:0006952">
    <property type="term" value="P:defense response"/>
    <property type="evidence" value="ECO:0007669"/>
    <property type="project" value="UniProtKB-KW"/>
</dbReference>
<dbReference type="InterPro" id="IPR013157">
    <property type="entry name" value="Aurein_antimicrobial_peptide"/>
</dbReference>
<dbReference type="Pfam" id="PF08256">
    <property type="entry name" value="Antimicrobial20"/>
    <property type="match status" value="1"/>
</dbReference>
<keyword id="KW-0878">Amphibian defense peptide</keyword>
<keyword id="KW-0903">Direct protein sequencing</keyword>
<keyword id="KW-0964">Secreted</keyword>